<protein>
    <recommendedName>
        <fullName evidence="1">Diaminopimelate epimerase</fullName>
        <shortName evidence="1">DAP epimerase</shortName>
        <ecNumber evidence="1">5.1.1.7</ecNumber>
    </recommendedName>
    <alternativeName>
        <fullName evidence="1">PLP-independent amino acid racemase</fullName>
    </alternativeName>
</protein>
<dbReference type="EC" id="5.1.1.7" evidence="1"/>
<dbReference type="EMBL" id="AL939125">
    <property type="protein sequence ID" value="CAA18330.1"/>
    <property type="molecule type" value="Genomic_DNA"/>
</dbReference>
<dbReference type="PIR" id="T35113">
    <property type="entry name" value="T35113"/>
</dbReference>
<dbReference type="RefSeq" id="NP_629917.1">
    <property type="nucleotide sequence ID" value="NC_003888.3"/>
</dbReference>
<dbReference type="RefSeq" id="WP_011030458.1">
    <property type="nucleotide sequence ID" value="NZ_VNID01000007.1"/>
</dbReference>
<dbReference type="SMR" id="O69969"/>
<dbReference type="FunCoup" id="O69969">
    <property type="interactions" value="361"/>
</dbReference>
<dbReference type="STRING" id="100226.gene:17763453"/>
<dbReference type="PaxDb" id="100226-SCO5793"/>
<dbReference type="KEGG" id="sco:SCO5793"/>
<dbReference type="PATRIC" id="fig|100226.15.peg.5883"/>
<dbReference type="eggNOG" id="COG0253">
    <property type="taxonomic scope" value="Bacteria"/>
</dbReference>
<dbReference type="HOGENOM" id="CLU_053306_4_0_11"/>
<dbReference type="InParanoid" id="O69969"/>
<dbReference type="OrthoDB" id="9805408at2"/>
<dbReference type="PhylomeDB" id="O69969"/>
<dbReference type="UniPathway" id="UPA00034">
    <property type="reaction ID" value="UER00025"/>
</dbReference>
<dbReference type="Proteomes" id="UP000001973">
    <property type="component" value="Chromosome"/>
</dbReference>
<dbReference type="GO" id="GO:0005829">
    <property type="term" value="C:cytosol"/>
    <property type="evidence" value="ECO:0000318"/>
    <property type="project" value="GO_Central"/>
</dbReference>
<dbReference type="GO" id="GO:0008837">
    <property type="term" value="F:diaminopimelate epimerase activity"/>
    <property type="evidence" value="ECO:0000318"/>
    <property type="project" value="GO_Central"/>
</dbReference>
<dbReference type="GO" id="GO:0009089">
    <property type="term" value="P:lysine biosynthetic process via diaminopimelate"/>
    <property type="evidence" value="ECO:0000318"/>
    <property type="project" value="GO_Central"/>
</dbReference>
<dbReference type="FunFam" id="3.10.310.10:FF:000014">
    <property type="entry name" value="Diaminopimelate epimerase"/>
    <property type="match status" value="1"/>
</dbReference>
<dbReference type="FunFam" id="3.10.310.10:FF:000016">
    <property type="entry name" value="Diaminopimelate epimerase"/>
    <property type="match status" value="1"/>
</dbReference>
<dbReference type="Gene3D" id="3.10.310.10">
    <property type="entry name" value="Diaminopimelate Epimerase, Chain A, domain 1"/>
    <property type="match status" value="2"/>
</dbReference>
<dbReference type="HAMAP" id="MF_00197">
    <property type="entry name" value="DAP_epimerase"/>
    <property type="match status" value="1"/>
</dbReference>
<dbReference type="InterPro" id="IPR018510">
    <property type="entry name" value="DAP_epimerase_AS"/>
</dbReference>
<dbReference type="InterPro" id="IPR001653">
    <property type="entry name" value="DAP_epimerase_DapF"/>
</dbReference>
<dbReference type="NCBIfam" id="TIGR00652">
    <property type="entry name" value="DapF"/>
    <property type="match status" value="1"/>
</dbReference>
<dbReference type="PANTHER" id="PTHR31689:SF0">
    <property type="entry name" value="DIAMINOPIMELATE EPIMERASE"/>
    <property type="match status" value="1"/>
</dbReference>
<dbReference type="PANTHER" id="PTHR31689">
    <property type="entry name" value="DIAMINOPIMELATE EPIMERASE, CHLOROPLASTIC"/>
    <property type="match status" value="1"/>
</dbReference>
<dbReference type="Pfam" id="PF01678">
    <property type="entry name" value="DAP_epimerase"/>
    <property type="match status" value="2"/>
</dbReference>
<dbReference type="SUPFAM" id="SSF54506">
    <property type="entry name" value="Diaminopimelate epimerase-like"/>
    <property type="match status" value="2"/>
</dbReference>
<dbReference type="PROSITE" id="PS01326">
    <property type="entry name" value="DAP_EPIMERASE"/>
    <property type="match status" value="1"/>
</dbReference>
<feature type="chain" id="PRO_0000149871" description="Diaminopimelate epimerase">
    <location>
        <begin position="1"/>
        <end position="289"/>
    </location>
</feature>
<feature type="active site" description="Proton donor" evidence="1">
    <location>
        <position position="85"/>
    </location>
</feature>
<feature type="active site" description="Proton acceptor" evidence="1">
    <location>
        <position position="218"/>
    </location>
</feature>
<feature type="binding site" evidence="1">
    <location>
        <position position="15"/>
    </location>
    <ligand>
        <name>substrate</name>
    </ligand>
</feature>
<feature type="binding site" evidence="1">
    <location>
        <position position="76"/>
    </location>
    <ligand>
        <name>substrate</name>
    </ligand>
</feature>
<feature type="binding site" evidence="1">
    <location>
        <begin position="86"/>
        <end position="87"/>
    </location>
    <ligand>
        <name>substrate</name>
    </ligand>
</feature>
<feature type="binding site" evidence="1">
    <location>
        <position position="158"/>
    </location>
    <ligand>
        <name>substrate</name>
    </ligand>
</feature>
<feature type="binding site" evidence="1">
    <location>
        <position position="191"/>
    </location>
    <ligand>
        <name>substrate</name>
    </ligand>
</feature>
<feature type="binding site" evidence="1">
    <location>
        <begin position="209"/>
        <end position="210"/>
    </location>
    <ligand>
        <name>substrate</name>
    </ligand>
</feature>
<feature type="binding site" evidence="1">
    <location>
        <begin position="219"/>
        <end position="220"/>
    </location>
    <ligand>
        <name>substrate</name>
    </ligand>
</feature>
<feature type="site" description="Could be important to modulate the pK values of the two catalytic cysteine residues" evidence="1">
    <location>
        <position position="160"/>
    </location>
</feature>
<feature type="site" description="Could be important to modulate the pK values of the two catalytic cysteine residues" evidence="1">
    <location>
        <position position="209"/>
    </location>
</feature>
<name>DAPF_STRCO</name>
<sequence>MSTRIAFLKGHGTENDFVIVPDPENALDLPPAAVAALCDRRAGLGGDGLLHVVRSAAHPEARGMAAEAEWFMDYRNGDGSVAEMCGNGVRVFARYLQHAGHVTEGDLAVATRGGVKTVHIAKNGDVTVGMGRALLPAGDVEVSVGEREWPARNVNMGNPHAVAFVADLDHAGDLYAPPSHAPAGAYPDGVNVEFVVDRGPRHVAMRVHERGSGETRSCGTGACAVAVATARRDGLDPAATGTPATYTVDVPGGTLVITERPDGEIEMTGPAVIVAEGEFDSAWLEGVLA</sequence>
<comment type="function">
    <text evidence="1">Catalyzes the stereoinversion of LL-2,6-diaminopimelate (L,L-DAP) to meso-diaminopimelate (meso-DAP), a precursor of L-lysine and an essential component of the bacterial peptidoglycan.</text>
</comment>
<comment type="catalytic activity">
    <reaction evidence="1">
        <text>(2S,6S)-2,6-diaminopimelate = meso-2,6-diaminopimelate</text>
        <dbReference type="Rhea" id="RHEA:15393"/>
        <dbReference type="ChEBI" id="CHEBI:57609"/>
        <dbReference type="ChEBI" id="CHEBI:57791"/>
        <dbReference type="EC" id="5.1.1.7"/>
    </reaction>
</comment>
<comment type="pathway">
    <text evidence="1">Amino-acid biosynthesis; L-lysine biosynthesis via DAP pathway; DL-2,6-diaminopimelate from LL-2,6-diaminopimelate: step 1/1.</text>
</comment>
<comment type="subunit">
    <text evidence="1">Homodimer.</text>
</comment>
<comment type="subcellular location">
    <subcellularLocation>
        <location evidence="1">Cytoplasm</location>
    </subcellularLocation>
</comment>
<comment type="similarity">
    <text evidence="1">Belongs to the diaminopimelate epimerase family.</text>
</comment>
<proteinExistence type="inferred from homology"/>
<keyword id="KW-0028">Amino-acid biosynthesis</keyword>
<keyword id="KW-0963">Cytoplasm</keyword>
<keyword id="KW-0413">Isomerase</keyword>
<keyword id="KW-0457">Lysine biosynthesis</keyword>
<keyword id="KW-1185">Reference proteome</keyword>
<evidence type="ECO:0000255" key="1">
    <source>
        <dbReference type="HAMAP-Rule" id="MF_00197"/>
    </source>
</evidence>
<organism>
    <name type="scientific">Streptomyces coelicolor (strain ATCC BAA-471 / A3(2) / M145)</name>
    <dbReference type="NCBI Taxonomy" id="100226"/>
    <lineage>
        <taxon>Bacteria</taxon>
        <taxon>Bacillati</taxon>
        <taxon>Actinomycetota</taxon>
        <taxon>Actinomycetes</taxon>
        <taxon>Kitasatosporales</taxon>
        <taxon>Streptomycetaceae</taxon>
        <taxon>Streptomyces</taxon>
        <taxon>Streptomyces albidoflavus group</taxon>
    </lineage>
</organism>
<reference key="1">
    <citation type="journal article" date="2002" name="Nature">
        <title>Complete genome sequence of the model actinomycete Streptomyces coelicolor A3(2).</title>
        <authorList>
            <person name="Bentley S.D."/>
            <person name="Chater K.F."/>
            <person name="Cerdeno-Tarraga A.-M."/>
            <person name="Challis G.L."/>
            <person name="Thomson N.R."/>
            <person name="James K.D."/>
            <person name="Harris D.E."/>
            <person name="Quail M.A."/>
            <person name="Kieser H."/>
            <person name="Harper D."/>
            <person name="Bateman A."/>
            <person name="Brown S."/>
            <person name="Chandra G."/>
            <person name="Chen C.W."/>
            <person name="Collins M."/>
            <person name="Cronin A."/>
            <person name="Fraser A."/>
            <person name="Goble A."/>
            <person name="Hidalgo J."/>
            <person name="Hornsby T."/>
            <person name="Howarth S."/>
            <person name="Huang C.-H."/>
            <person name="Kieser T."/>
            <person name="Larke L."/>
            <person name="Murphy L.D."/>
            <person name="Oliver K."/>
            <person name="O'Neil S."/>
            <person name="Rabbinowitsch E."/>
            <person name="Rajandream M.A."/>
            <person name="Rutherford K.M."/>
            <person name="Rutter S."/>
            <person name="Seeger K."/>
            <person name="Saunders D."/>
            <person name="Sharp S."/>
            <person name="Squares R."/>
            <person name="Squares S."/>
            <person name="Taylor K."/>
            <person name="Warren T."/>
            <person name="Wietzorrek A."/>
            <person name="Woodward J.R."/>
            <person name="Barrell B.G."/>
            <person name="Parkhill J."/>
            <person name="Hopwood D.A."/>
        </authorList>
    </citation>
    <scope>NUCLEOTIDE SEQUENCE [LARGE SCALE GENOMIC DNA]</scope>
    <source>
        <strain>ATCC BAA-471 / A3(2) / M145</strain>
    </source>
</reference>
<gene>
    <name evidence="1" type="primary">dapF</name>
    <name type="ordered locus">SCO5793</name>
    <name type="ORF">SC4H2.14</name>
</gene>
<accession>O69969</accession>